<reference key="1">
    <citation type="journal article" date="1998" name="Nature">
        <title>Deciphering the biology of Mycobacterium tuberculosis from the complete genome sequence.</title>
        <authorList>
            <person name="Cole S.T."/>
            <person name="Brosch R."/>
            <person name="Parkhill J."/>
            <person name="Garnier T."/>
            <person name="Churcher C.M."/>
            <person name="Harris D.E."/>
            <person name="Gordon S.V."/>
            <person name="Eiglmeier K."/>
            <person name="Gas S."/>
            <person name="Barry C.E. III"/>
            <person name="Tekaia F."/>
            <person name="Badcock K."/>
            <person name="Basham D."/>
            <person name="Brown D."/>
            <person name="Chillingworth T."/>
            <person name="Connor R."/>
            <person name="Davies R.M."/>
            <person name="Devlin K."/>
            <person name="Feltwell T."/>
            <person name="Gentles S."/>
            <person name="Hamlin N."/>
            <person name="Holroyd S."/>
            <person name="Hornsby T."/>
            <person name="Jagels K."/>
            <person name="Krogh A."/>
            <person name="McLean J."/>
            <person name="Moule S."/>
            <person name="Murphy L.D."/>
            <person name="Oliver S."/>
            <person name="Osborne J."/>
            <person name="Quail M.A."/>
            <person name="Rajandream M.A."/>
            <person name="Rogers J."/>
            <person name="Rutter S."/>
            <person name="Seeger K."/>
            <person name="Skelton S."/>
            <person name="Squares S."/>
            <person name="Squares R."/>
            <person name="Sulston J.E."/>
            <person name="Taylor K."/>
            <person name="Whitehead S."/>
            <person name="Barrell B.G."/>
        </authorList>
    </citation>
    <scope>NUCLEOTIDE SEQUENCE [LARGE SCALE GENOMIC DNA]</scope>
    <source>
        <strain>ATCC 25618 / H37Rv</strain>
    </source>
</reference>
<reference key="2">
    <citation type="journal article" date="2011" name="Mol. Cell. Proteomics">
        <title>Proteogenomic analysis of Mycobacterium tuberculosis by high resolution mass spectrometry.</title>
        <authorList>
            <person name="Kelkar D.S."/>
            <person name="Kumar D."/>
            <person name="Kumar P."/>
            <person name="Balakrishnan L."/>
            <person name="Muthusamy B."/>
            <person name="Yadav A.K."/>
            <person name="Shrivastava P."/>
            <person name="Marimuthu A."/>
            <person name="Anand S."/>
            <person name="Sundaram H."/>
            <person name="Kingsbury R."/>
            <person name="Harsha H.C."/>
            <person name="Nair B."/>
            <person name="Prasad T.S."/>
            <person name="Chauhan D.S."/>
            <person name="Katoch K."/>
            <person name="Katoch V.M."/>
            <person name="Kumar P."/>
            <person name="Chaerkady R."/>
            <person name="Ramachandran S."/>
            <person name="Dash D."/>
            <person name="Pandey A."/>
        </authorList>
    </citation>
    <scope>IDENTIFICATION BY MASS SPECTROMETRY [LARGE SCALE ANALYSIS]</scope>
    <source>
        <strain>ATCC 25618 / H37Rv</strain>
    </source>
</reference>
<reference key="3">
    <citation type="journal article" date="2012" name="Microbiol. Res.">
        <title>Characterization of Ffh of Mycobacterium tuberculosis and its interaction with 4.5S RNA.</title>
        <authorList>
            <person name="Palaniyandi K."/>
            <person name="Veerasamy M."/>
            <person name="Narayanan S."/>
        </authorList>
    </citation>
    <scope>FUNCTION AS A GTPASE</scope>
    <scope>CATALYTIC ACTIVITY</scope>
    <scope>INTERACTION WITH 4.5S RNA</scope>
    <source>
        <strain>ATCC 25618 / H37Rv</strain>
    </source>
</reference>
<reference key="4">
    <citation type="journal article" date="2018" name="Can. J. Microbiol.">
        <title>Characterization of FtsY, its interaction with Ffh, and proteomic identification of their potential substrates in Mycobacterium tuberculosis.</title>
        <authorList>
            <person name="Venkatesan A."/>
            <person name="Palaniyandi K."/>
            <person name="Sharma D."/>
            <person name="Bisht D."/>
            <person name="Narayanan S."/>
        </authorList>
    </citation>
    <scope>FUNCTION</scope>
    <scope>CATALYTIC ACTIVITY</scope>
    <scope>ACTIVITY REGULATION</scope>
    <scope>INTERACTION WITH FTSY</scope>
    <scope>DISRUPTION PHENOTYPE</scope>
    <source>
        <strain>H37Rv</strain>
    </source>
</reference>
<accession>P9WGD7</accession>
<accession>L0TDR8</accession>
<accession>P66844</accession>
<accession>Q10963</accession>
<gene>
    <name evidence="1" type="primary">ffh</name>
    <name type="ordered locus">Rv2916c</name>
    <name type="ORF">MTCY338.04c</name>
</gene>
<feature type="chain" id="PRO_0000101163" description="Signal recognition particle protein">
    <location>
        <begin position="1"/>
        <end position="525"/>
    </location>
</feature>
<feature type="region of interest" description="Disordered" evidence="2">
    <location>
        <begin position="437"/>
        <end position="525"/>
    </location>
</feature>
<feature type="compositionally biased region" description="Basic residues" evidence="2">
    <location>
        <begin position="447"/>
        <end position="467"/>
    </location>
</feature>
<feature type="compositionally biased region" description="Low complexity" evidence="2">
    <location>
        <begin position="480"/>
        <end position="497"/>
    </location>
</feature>
<feature type="binding site" evidence="1">
    <location>
        <begin position="107"/>
        <end position="114"/>
    </location>
    <ligand>
        <name>GTP</name>
        <dbReference type="ChEBI" id="CHEBI:37565"/>
    </ligand>
</feature>
<feature type="binding site" evidence="1">
    <location>
        <begin position="196"/>
        <end position="200"/>
    </location>
    <ligand>
        <name>GTP</name>
        <dbReference type="ChEBI" id="CHEBI:37565"/>
    </ligand>
</feature>
<feature type="binding site" evidence="1">
    <location>
        <begin position="254"/>
        <end position="257"/>
    </location>
    <ligand>
        <name>GTP</name>
        <dbReference type="ChEBI" id="CHEBI:37565"/>
    </ligand>
</feature>
<evidence type="ECO:0000255" key="1">
    <source>
        <dbReference type="HAMAP-Rule" id="MF_00306"/>
    </source>
</evidence>
<evidence type="ECO:0000256" key="2">
    <source>
        <dbReference type="SAM" id="MobiDB-lite"/>
    </source>
</evidence>
<evidence type="ECO:0000269" key="3">
    <source>
    </source>
</evidence>
<evidence type="ECO:0000269" key="4">
    <source>
    </source>
</evidence>
<evidence type="ECO:0000303" key="5">
    <source>
    </source>
</evidence>
<name>SRP54_MYCTU</name>
<dbReference type="EC" id="3.6.5.4" evidence="1 3 4"/>
<dbReference type="EMBL" id="AL123456">
    <property type="protein sequence ID" value="CCP45718.1"/>
    <property type="molecule type" value="Genomic_DNA"/>
</dbReference>
<dbReference type="PIR" id="D70747">
    <property type="entry name" value="D70747"/>
</dbReference>
<dbReference type="RefSeq" id="NP_217432.1">
    <property type="nucleotide sequence ID" value="NC_000962.3"/>
</dbReference>
<dbReference type="RefSeq" id="WP_003414748.1">
    <property type="nucleotide sequence ID" value="NZ_NVQJ01000006.1"/>
</dbReference>
<dbReference type="SMR" id="P9WGD7"/>
<dbReference type="FunCoup" id="P9WGD7">
    <property type="interactions" value="517"/>
</dbReference>
<dbReference type="STRING" id="83332.Rv2916c"/>
<dbReference type="PaxDb" id="83332-Rv2916c"/>
<dbReference type="DNASU" id="888242"/>
<dbReference type="GeneID" id="45426903"/>
<dbReference type="GeneID" id="888242"/>
<dbReference type="KEGG" id="mtu:Rv2916c"/>
<dbReference type="KEGG" id="mtv:RVBD_2916c"/>
<dbReference type="TubercuList" id="Rv2916c"/>
<dbReference type="eggNOG" id="COG0541">
    <property type="taxonomic scope" value="Bacteria"/>
</dbReference>
<dbReference type="InParanoid" id="P9WGD7"/>
<dbReference type="OrthoDB" id="9804720at2"/>
<dbReference type="PhylomeDB" id="P9WGD7"/>
<dbReference type="Proteomes" id="UP000001584">
    <property type="component" value="Chromosome"/>
</dbReference>
<dbReference type="GO" id="GO:0009274">
    <property type="term" value="C:peptidoglycan-based cell wall"/>
    <property type="evidence" value="ECO:0007005"/>
    <property type="project" value="MTBBASE"/>
</dbReference>
<dbReference type="GO" id="GO:0005886">
    <property type="term" value="C:plasma membrane"/>
    <property type="evidence" value="ECO:0007005"/>
    <property type="project" value="MTBBASE"/>
</dbReference>
<dbReference type="GO" id="GO:0048500">
    <property type="term" value="C:signal recognition particle"/>
    <property type="evidence" value="ECO:0007669"/>
    <property type="project" value="UniProtKB-UniRule"/>
</dbReference>
<dbReference type="GO" id="GO:0008312">
    <property type="term" value="F:7S RNA binding"/>
    <property type="evidence" value="ECO:0007669"/>
    <property type="project" value="InterPro"/>
</dbReference>
<dbReference type="GO" id="GO:0016887">
    <property type="term" value="F:ATP hydrolysis activity"/>
    <property type="evidence" value="ECO:0007669"/>
    <property type="project" value="InterPro"/>
</dbReference>
<dbReference type="GO" id="GO:0005525">
    <property type="term" value="F:GTP binding"/>
    <property type="evidence" value="ECO:0007669"/>
    <property type="project" value="UniProtKB-UniRule"/>
</dbReference>
<dbReference type="GO" id="GO:0003924">
    <property type="term" value="F:GTPase activity"/>
    <property type="evidence" value="ECO:0007669"/>
    <property type="project" value="UniProtKB-UniRule"/>
</dbReference>
<dbReference type="GO" id="GO:0006614">
    <property type="term" value="P:SRP-dependent cotranslational protein targeting to membrane"/>
    <property type="evidence" value="ECO:0007669"/>
    <property type="project" value="InterPro"/>
</dbReference>
<dbReference type="CDD" id="cd18539">
    <property type="entry name" value="SRP_G"/>
    <property type="match status" value="1"/>
</dbReference>
<dbReference type="FunFam" id="3.40.50.300:FF:000022">
    <property type="entry name" value="Signal recognition particle 54 kDa subunit"/>
    <property type="match status" value="1"/>
</dbReference>
<dbReference type="Gene3D" id="3.40.50.300">
    <property type="entry name" value="P-loop containing nucleotide triphosphate hydrolases"/>
    <property type="match status" value="1"/>
</dbReference>
<dbReference type="Gene3D" id="1.20.120.140">
    <property type="entry name" value="Signal recognition particle SRP54, nucleotide-binding domain"/>
    <property type="match status" value="1"/>
</dbReference>
<dbReference type="Gene3D" id="1.10.260.30">
    <property type="entry name" value="Signal recognition particle, SRP54 subunit, M-domain"/>
    <property type="match status" value="1"/>
</dbReference>
<dbReference type="HAMAP" id="MF_00306">
    <property type="entry name" value="SRP54"/>
    <property type="match status" value="1"/>
</dbReference>
<dbReference type="InterPro" id="IPR003593">
    <property type="entry name" value="AAA+_ATPase"/>
</dbReference>
<dbReference type="InterPro" id="IPR027417">
    <property type="entry name" value="P-loop_NTPase"/>
</dbReference>
<dbReference type="InterPro" id="IPR036891">
    <property type="entry name" value="Signal_recog_part_SRP54_M_sf"/>
</dbReference>
<dbReference type="InterPro" id="IPR013822">
    <property type="entry name" value="Signal_recog_particl_SRP54_hlx"/>
</dbReference>
<dbReference type="InterPro" id="IPR004125">
    <property type="entry name" value="Signal_recog_particle_SRP54_M"/>
</dbReference>
<dbReference type="InterPro" id="IPR004780">
    <property type="entry name" value="SRP"/>
</dbReference>
<dbReference type="InterPro" id="IPR022941">
    <property type="entry name" value="SRP54"/>
</dbReference>
<dbReference type="InterPro" id="IPR000897">
    <property type="entry name" value="SRP54_GTPase_dom"/>
</dbReference>
<dbReference type="InterPro" id="IPR042101">
    <property type="entry name" value="SRP54_N_sf"/>
</dbReference>
<dbReference type="NCBIfam" id="TIGR00959">
    <property type="entry name" value="ffh"/>
    <property type="match status" value="1"/>
</dbReference>
<dbReference type="PANTHER" id="PTHR11564">
    <property type="entry name" value="SIGNAL RECOGNITION PARTICLE 54K PROTEIN SRP54"/>
    <property type="match status" value="1"/>
</dbReference>
<dbReference type="PANTHER" id="PTHR11564:SF5">
    <property type="entry name" value="SIGNAL RECOGNITION PARTICLE SUBUNIT SRP54"/>
    <property type="match status" value="1"/>
</dbReference>
<dbReference type="Pfam" id="PF00448">
    <property type="entry name" value="SRP54"/>
    <property type="match status" value="1"/>
</dbReference>
<dbReference type="Pfam" id="PF02881">
    <property type="entry name" value="SRP54_N"/>
    <property type="match status" value="1"/>
</dbReference>
<dbReference type="Pfam" id="PF02978">
    <property type="entry name" value="SRP_SPB"/>
    <property type="match status" value="1"/>
</dbReference>
<dbReference type="SMART" id="SM00382">
    <property type="entry name" value="AAA"/>
    <property type="match status" value="1"/>
</dbReference>
<dbReference type="SMART" id="SM00962">
    <property type="entry name" value="SRP54"/>
    <property type="match status" value="1"/>
</dbReference>
<dbReference type="SMART" id="SM00963">
    <property type="entry name" value="SRP54_N"/>
    <property type="match status" value="1"/>
</dbReference>
<dbReference type="SUPFAM" id="SSF52540">
    <property type="entry name" value="P-loop containing nucleoside triphosphate hydrolases"/>
    <property type="match status" value="1"/>
</dbReference>
<dbReference type="SUPFAM" id="SSF47446">
    <property type="entry name" value="Signal peptide-binding domain"/>
    <property type="match status" value="1"/>
</dbReference>
<dbReference type="PROSITE" id="PS00300">
    <property type="entry name" value="SRP54"/>
    <property type="match status" value="1"/>
</dbReference>
<organism>
    <name type="scientific">Mycobacterium tuberculosis (strain ATCC 25618 / H37Rv)</name>
    <dbReference type="NCBI Taxonomy" id="83332"/>
    <lineage>
        <taxon>Bacteria</taxon>
        <taxon>Bacillati</taxon>
        <taxon>Actinomycetota</taxon>
        <taxon>Actinomycetes</taxon>
        <taxon>Mycobacteriales</taxon>
        <taxon>Mycobacteriaceae</taxon>
        <taxon>Mycobacterium</taxon>
        <taxon>Mycobacterium tuberculosis complex</taxon>
    </lineage>
</organism>
<proteinExistence type="evidence at protein level"/>
<protein>
    <recommendedName>
        <fullName evidence="1">Signal recognition particle protein</fullName>
        <shortName evidence="5">SRP</shortName>
        <ecNumber evidence="1 3 4">3.6.5.4</ecNumber>
    </recommendedName>
    <alternativeName>
        <fullName evidence="1">Fifty-four homolog</fullName>
    </alternativeName>
</protein>
<sequence>MFESLSDRLTAALQGLRGKGRLTDADIDATTREIRLALLEADVSLPVVRAFIHRIKERARGAEVSSALNPAQQVVKIVNEELISILGGETRELAFAKTPPTVVMLAGLQGSGKTTLAGKLAARLRGQGHTPLLVACDLQRPAAVNQLQVVGERAGVPVFAPHPGASPESGPGDPVAVAAAGLAEARAKHFDVVIVDTAGRLGIDEELMAQAAAIRDAINPDEVLFVLDAMIGQDAVTTAAAFGEGVGFTGVALTKLDGDARGGAALSVREVTGVPILFASTGEKLEDFDVFHPDRMASRILGMGDVLSLIEQAEQVFDAQQAEEAAAKIGAGELTLEDFLEQMLAVRKMGPIGNLLGMLPGAAQMKDALAEVDDKQLDRVQAIIRGMTPQERADPKIINASRRLRIANGSGVTVSEVNQLVERFFEARKMMSSMLGGMGIPGIGRKSATRKSKGAKGKSGKKSKKGTRGPTPPKVKSPFGVPGMPGLAGLPGGLPDLSQMPKGLDELPPGLADFDLSKLKFPGKK</sequence>
<comment type="function">
    <text evidence="1 3 4">Involved in targeting and insertion of nascent membrane proteins into the cytoplasmic membrane. Binds to the hydrophobic signal sequence of the ribosome-nascent chain (RNC) as it emerges from the ribosomes. The SRP-RNC complex is then targeted to the cytoplasmic membrane where it interacts with the SRP receptor FtsY (By similarity). Most of the substrate proteins are involved in stress regulation, lipid metabolism, intermediary metabolism, and cell wall processes (PubMed:29361248). Shows GTPase activity (PubMed:22534010).</text>
</comment>
<comment type="catalytic activity">
    <reaction evidence="1 3 4">
        <text>GTP + H2O = GDP + phosphate + H(+)</text>
        <dbReference type="Rhea" id="RHEA:19669"/>
        <dbReference type="ChEBI" id="CHEBI:15377"/>
        <dbReference type="ChEBI" id="CHEBI:15378"/>
        <dbReference type="ChEBI" id="CHEBI:37565"/>
        <dbReference type="ChEBI" id="CHEBI:43474"/>
        <dbReference type="ChEBI" id="CHEBI:58189"/>
        <dbReference type="EC" id="3.6.5.4"/>
    </reaction>
</comment>
<comment type="activity regulation">
    <text evidence="4">The SRP-FtsY complex formation results in mutual stimulation of their GTP hydrolysis activity.</text>
</comment>
<comment type="subunit">
    <text evidence="3 4">Part of the signal recognition particle protein translocation system, which is composed of SRP and FtsY (PubMed:29361248). SRP is a ribonucleoprotein composed of Ffh and a 4.5S RNA molecule (PubMed:22534010). Can interact with FtsY in the absence of 4.5S RNA (PubMed:29361248).</text>
</comment>
<comment type="subcellular location">
    <subcellularLocation>
        <location evidence="1">Cytoplasm</location>
    </subcellularLocation>
    <text evidence="1">The SRP-RNC complex is targeted to the cytoplasmic membrane.</text>
</comment>
<comment type="domain">
    <text evidence="1">Composed of three domains: the N-terminal N domain, which is responsible for interactions with the ribosome, the central G domain, which binds GTP, and the C-terminal M domain, which binds the RNA and the signal sequence of the RNC.</text>
</comment>
<comment type="disruption phenotype">
    <text evidence="4">Depletion of ffh (SRP) and ftsY results in differential expression of 14 proteins.</text>
</comment>
<comment type="similarity">
    <text evidence="1">Belongs to the GTP-binding SRP family. SRP54 subfamily.</text>
</comment>
<keyword id="KW-0963">Cytoplasm</keyword>
<keyword id="KW-0342">GTP-binding</keyword>
<keyword id="KW-0378">Hydrolase</keyword>
<keyword id="KW-0547">Nucleotide-binding</keyword>
<keyword id="KW-1185">Reference proteome</keyword>
<keyword id="KW-0687">Ribonucleoprotein</keyword>
<keyword id="KW-0694">RNA-binding</keyword>
<keyword id="KW-0733">Signal recognition particle</keyword>